<dbReference type="EC" id="2.6.1.1" evidence="3"/>
<dbReference type="EC" id="2.6.1.7" evidence="3"/>
<dbReference type="PIR" id="B26341">
    <property type="entry name" value="B26341"/>
</dbReference>
<dbReference type="SMR" id="P08907"/>
<dbReference type="STRING" id="9796.ENSECAP00000014550"/>
<dbReference type="PaxDb" id="9796-ENSECAP00000014550"/>
<dbReference type="PeptideAtlas" id="P08907"/>
<dbReference type="InParanoid" id="P08907"/>
<dbReference type="Proteomes" id="UP000002281">
    <property type="component" value="Unplaced"/>
</dbReference>
<dbReference type="GO" id="GO:0005759">
    <property type="term" value="C:mitochondrial matrix"/>
    <property type="evidence" value="ECO:0007669"/>
    <property type="project" value="UniProtKB-SubCell"/>
</dbReference>
<dbReference type="GO" id="GO:0005739">
    <property type="term" value="C:mitochondrion"/>
    <property type="evidence" value="ECO:0000250"/>
    <property type="project" value="UniProtKB"/>
</dbReference>
<dbReference type="GO" id="GO:0005886">
    <property type="term" value="C:plasma membrane"/>
    <property type="evidence" value="ECO:0007669"/>
    <property type="project" value="UniProtKB-SubCell"/>
</dbReference>
<dbReference type="GO" id="GO:0016212">
    <property type="term" value="F:kynurenine-oxoglutarate transaminase activity"/>
    <property type="evidence" value="ECO:0007669"/>
    <property type="project" value="UniProtKB-EC"/>
</dbReference>
<dbReference type="GO" id="GO:0004069">
    <property type="term" value="F:L-aspartate:2-oxoglutarate aminotransferase activity"/>
    <property type="evidence" value="ECO:0000250"/>
    <property type="project" value="UniProtKB"/>
</dbReference>
<dbReference type="GO" id="GO:0030170">
    <property type="term" value="F:pyridoxal phosphate binding"/>
    <property type="evidence" value="ECO:0007669"/>
    <property type="project" value="InterPro"/>
</dbReference>
<dbReference type="GO" id="GO:0006103">
    <property type="term" value="P:2-oxoglutarate metabolic process"/>
    <property type="evidence" value="ECO:0000250"/>
    <property type="project" value="UniProtKB"/>
</dbReference>
<dbReference type="GO" id="GO:0006533">
    <property type="term" value="P:aspartate catabolic process"/>
    <property type="evidence" value="ECO:0000318"/>
    <property type="project" value="GO_Central"/>
</dbReference>
<dbReference type="GO" id="GO:0006531">
    <property type="term" value="P:aspartate metabolic process"/>
    <property type="evidence" value="ECO:0000250"/>
    <property type="project" value="UniProtKB"/>
</dbReference>
<dbReference type="GO" id="GO:0009058">
    <property type="term" value="P:biosynthetic process"/>
    <property type="evidence" value="ECO:0007669"/>
    <property type="project" value="InterPro"/>
</dbReference>
<dbReference type="GO" id="GO:0006536">
    <property type="term" value="P:glutamate metabolic process"/>
    <property type="evidence" value="ECO:0000250"/>
    <property type="project" value="UniProtKB"/>
</dbReference>
<dbReference type="GO" id="GO:0006869">
    <property type="term" value="P:lipid transport"/>
    <property type="evidence" value="ECO:0007669"/>
    <property type="project" value="UniProtKB-KW"/>
</dbReference>
<dbReference type="CDD" id="cd00609">
    <property type="entry name" value="AAT_like"/>
    <property type="match status" value="1"/>
</dbReference>
<dbReference type="FunFam" id="3.40.640.10:FF:000026">
    <property type="entry name" value="Aspartate aminotransferase"/>
    <property type="match status" value="1"/>
</dbReference>
<dbReference type="FunFam" id="3.90.1150.10:FF:000001">
    <property type="entry name" value="Aspartate aminotransferase"/>
    <property type="match status" value="1"/>
</dbReference>
<dbReference type="FunFam" id="3.90.1150.10:FF:000160">
    <property type="entry name" value="Similar to aspartate aminotransferase"/>
    <property type="match status" value="1"/>
</dbReference>
<dbReference type="Gene3D" id="3.90.1150.10">
    <property type="entry name" value="Aspartate Aminotransferase, domain 1"/>
    <property type="match status" value="1"/>
</dbReference>
<dbReference type="Gene3D" id="3.40.640.10">
    <property type="entry name" value="Type I PLP-dependent aspartate aminotransferase-like (Major domain)"/>
    <property type="match status" value="1"/>
</dbReference>
<dbReference type="InterPro" id="IPR004839">
    <property type="entry name" value="Aminotransferase_I/II_large"/>
</dbReference>
<dbReference type="InterPro" id="IPR000796">
    <property type="entry name" value="Asp_trans"/>
</dbReference>
<dbReference type="InterPro" id="IPR004838">
    <property type="entry name" value="NHTrfase_class1_PyrdxlP-BS"/>
</dbReference>
<dbReference type="InterPro" id="IPR015424">
    <property type="entry name" value="PyrdxlP-dep_Trfase"/>
</dbReference>
<dbReference type="InterPro" id="IPR015421">
    <property type="entry name" value="PyrdxlP-dep_Trfase_major"/>
</dbReference>
<dbReference type="InterPro" id="IPR015422">
    <property type="entry name" value="PyrdxlP-dep_Trfase_small"/>
</dbReference>
<dbReference type="NCBIfam" id="NF006719">
    <property type="entry name" value="PRK09257.1"/>
    <property type="match status" value="1"/>
</dbReference>
<dbReference type="PANTHER" id="PTHR11879">
    <property type="entry name" value="ASPARTATE AMINOTRANSFERASE"/>
    <property type="match status" value="1"/>
</dbReference>
<dbReference type="PANTHER" id="PTHR11879:SF22">
    <property type="entry name" value="ASPARTATE AMINOTRANSFERASE, MITOCHONDRIAL"/>
    <property type="match status" value="1"/>
</dbReference>
<dbReference type="Pfam" id="PF00155">
    <property type="entry name" value="Aminotran_1_2"/>
    <property type="match status" value="1"/>
</dbReference>
<dbReference type="PRINTS" id="PR00799">
    <property type="entry name" value="TRANSAMINASE"/>
</dbReference>
<dbReference type="SUPFAM" id="SSF53383">
    <property type="entry name" value="PLP-dependent transferases"/>
    <property type="match status" value="1"/>
</dbReference>
<dbReference type="PROSITE" id="PS00105">
    <property type="entry name" value="AA_TRANSFER_CLASS_1"/>
    <property type="match status" value="1"/>
</dbReference>
<accession>P08907</accession>
<sequence length="401" mass="44567">SSWWAHVEMGPPDPILGVTEAYKRDTNSKKMNLGVGAYRDDNGKPYVLPSVRKAEAQIAAKNLDKEYLPIGGLAEFCKASAELALGENSEALKSGRYVTVQSISGTGALRIGANFLQRFFKFSRDVFLPKPSWGNHTPIFRDAGLQLHAYRYYDPKTCGFDVTGALEDISKIPQQSIILLHACAHNPTGVDPRPEQWKEIATLVKKNNLFAFFDMAYQGFASGDGNKDAWAVRYFIEQGINVCLCQSYAKNMGLYGERVGAFTMVCKDADEAKRVESQLKILIRPLYSNPPLNGARIASTILTSPDLRKQWLQEVKGMADRIISMRTQLVSNLKKEGSSHSWQHIADQIGMFCFTGLKPEQVERLTKEFSIYMTKDGRISVAGVTSGNVGYLAHAIHQVTK</sequence>
<feature type="chain" id="PRO_0000123885" description="Aspartate aminotransferase, mitochondrial">
    <location>
        <begin position="1"/>
        <end position="401"/>
    </location>
</feature>
<feature type="binding site" evidence="1">
    <location>
        <position position="36"/>
    </location>
    <ligand>
        <name>substrate</name>
    </ligand>
</feature>
<feature type="binding site" evidence="1">
    <location>
        <position position="133"/>
    </location>
    <ligand>
        <name>substrate</name>
    </ligand>
</feature>
<feature type="binding site" evidence="1">
    <location>
        <position position="186"/>
    </location>
    <ligand>
        <name>substrate</name>
    </ligand>
</feature>
<feature type="binding site" evidence="1">
    <location>
        <position position="378"/>
    </location>
    <ligand>
        <name>substrate</name>
    </ligand>
</feature>
<feature type="modified residue" description="Phosphothreonine" evidence="2">
    <location>
        <position position="19"/>
    </location>
</feature>
<feature type="modified residue" description="N6-acetyllysine" evidence="4">
    <location>
        <position position="30"/>
    </location>
</feature>
<feature type="modified residue" description="N6-acetyllysine; alternate" evidence="2">
    <location>
        <position position="44"/>
    </location>
</feature>
<feature type="modified residue" description="N6-succinyllysine; alternate" evidence="4">
    <location>
        <position position="44"/>
    </location>
</feature>
<feature type="modified residue" description="N6-acetyllysine" evidence="4">
    <location>
        <position position="53"/>
    </location>
</feature>
<feature type="modified residue" description="N6-acetyllysine; alternate" evidence="2">
    <location>
        <position position="61"/>
    </location>
</feature>
<feature type="modified residue" description="N6-succinyllysine; alternate" evidence="4">
    <location>
        <position position="61"/>
    </location>
</feature>
<feature type="modified residue" description="3'-nitrotyrosine; alternate" evidence="4">
    <location>
        <position position="67"/>
    </location>
</feature>
<feature type="modified residue" description="Phosphotyrosine; alternate" evidence="2">
    <location>
        <position position="67"/>
    </location>
</feature>
<feature type="modified residue" description="N6-acetyllysine; alternate" evidence="4">
    <location>
        <position position="78"/>
    </location>
</feature>
<feature type="modified residue" description="N6-succinyllysine; alternate" evidence="4">
    <location>
        <position position="78"/>
    </location>
</feature>
<feature type="modified residue" description="N6-acetyllysine; alternate" evidence="4">
    <location>
        <position position="93"/>
    </location>
</feature>
<feature type="modified residue" description="N6-succinyllysine; alternate" evidence="4">
    <location>
        <position position="93"/>
    </location>
</feature>
<feature type="modified residue" description="N6-acetyllysine; alternate" evidence="2">
    <location>
        <position position="130"/>
    </location>
</feature>
<feature type="modified residue" description="N6-succinyllysine; alternate" evidence="4">
    <location>
        <position position="130"/>
    </location>
</feature>
<feature type="modified residue" description="N6-acetyllysine; alternate" evidence="4">
    <location>
        <position position="156"/>
    </location>
</feature>
<feature type="modified residue" description="N6-succinyllysine; alternate" evidence="4">
    <location>
        <position position="156"/>
    </location>
</feature>
<feature type="modified residue" description="N6-succinyllysine" evidence="4">
    <location>
        <position position="198"/>
    </location>
</feature>
<feature type="modified residue" description="N6-acetyllysine" evidence="2">
    <location>
        <position position="205"/>
    </location>
</feature>
<feature type="modified residue" description="N6-(pyridoxal phosphate)lysine; alternate">
    <location>
        <position position="250"/>
    </location>
</feature>
<feature type="modified residue" description="N6-acetyllysine; alternate" evidence="4">
    <location>
        <position position="250"/>
    </location>
</feature>
<feature type="modified residue" description="N6-acetyllysine; alternate" evidence="2">
    <location>
        <position position="267"/>
    </location>
</feature>
<feature type="modified residue" description="N6-succinyllysine; alternate" evidence="4">
    <location>
        <position position="267"/>
    </location>
</feature>
<feature type="modified residue" description="N6-acetyllysine" evidence="4">
    <location>
        <position position="273"/>
    </location>
</feature>
<feature type="modified residue" description="N6-acetyllysine; alternate" evidence="4">
    <location>
        <position position="280"/>
    </location>
</feature>
<feature type="modified residue" description="N6-succinyllysine; alternate" evidence="5">
    <location>
        <position position="280"/>
    </location>
</feature>
<feature type="modified residue" description="Asymmetric dimethylarginine" evidence="4">
    <location>
        <position position="284"/>
    </location>
</feature>
<feature type="modified residue" description="N6-acetyllysine; alternate" evidence="4">
    <location>
        <position position="309"/>
    </location>
</feature>
<feature type="modified residue" description="N6-succinyllysine; alternate" evidence="4">
    <location>
        <position position="309"/>
    </location>
</feature>
<feature type="modified residue" description="N6-acetyllysine" evidence="4">
    <location>
        <position position="316"/>
    </location>
</feature>
<feature type="modified residue" description="N6-acetyllysine; alternate" evidence="4">
    <location>
        <position position="334"/>
    </location>
</feature>
<feature type="modified residue" description="N6-succinyllysine; alternate" evidence="4">
    <location>
        <position position="334"/>
    </location>
</feature>
<feature type="modified residue" description="N6-acetyllysine" evidence="4">
    <location>
        <position position="335"/>
    </location>
</feature>
<feature type="modified residue" description="N6-acetyllysine" evidence="4">
    <location>
        <position position="358"/>
    </location>
</feature>
<feature type="modified residue" description="N6-acetyllysine; alternate" evidence="2">
    <location>
        <position position="367"/>
    </location>
</feature>
<feature type="modified residue" description="N6-succinyllysine; alternate" evidence="4">
    <location>
        <position position="367"/>
    </location>
</feature>
<feature type="modified residue" description="N6-acetyllysine; alternate" evidence="2">
    <location>
        <position position="375"/>
    </location>
</feature>
<feature type="modified residue" description="N6-succinyllysine; alternate" evidence="4">
    <location>
        <position position="375"/>
    </location>
</feature>
<comment type="function">
    <text evidence="2">Catalyzes the irreversible transamination of the L-tryptophan metabolite L-kynurenine to form kynurenic acid (KA). As a member of the malate-aspartate shuttle, it has a key role in the intracellular NAD(H) redox balance. Is important for metabolite exchange between mitochondria and cytosol, and for amino acid metabolism. Facilitates cellular uptake of long-chain free fatty acids.</text>
</comment>
<comment type="catalytic activity">
    <reaction evidence="3">
        <text>L-aspartate + 2-oxoglutarate = oxaloacetate + L-glutamate</text>
        <dbReference type="Rhea" id="RHEA:21824"/>
        <dbReference type="ChEBI" id="CHEBI:16452"/>
        <dbReference type="ChEBI" id="CHEBI:16810"/>
        <dbReference type="ChEBI" id="CHEBI:29985"/>
        <dbReference type="ChEBI" id="CHEBI:29991"/>
        <dbReference type="EC" id="2.6.1.1"/>
    </reaction>
</comment>
<comment type="catalytic activity">
    <reaction evidence="3">
        <text>L-kynurenine + 2-oxoglutarate = kynurenate + L-glutamate + H2O</text>
        <dbReference type="Rhea" id="RHEA:65560"/>
        <dbReference type="ChEBI" id="CHEBI:15377"/>
        <dbReference type="ChEBI" id="CHEBI:16810"/>
        <dbReference type="ChEBI" id="CHEBI:29985"/>
        <dbReference type="ChEBI" id="CHEBI:57959"/>
        <dbReference type="ChEBI" id="CHEBI:58454"/>
        <dbReference type="EC" id="2.6.1.7"/>
    </reaction>
</comment>
<comment type="cofactor">
    <cofactor>
        <name>pyridoxal 5'-phosphate</name>
        <dbReference type="ChEBI" id="CHEBI:597326"/>
    </cofactor>
</comment>
<comment type="subunit">
    <text>Homodimer.</text>
</comment>
<comment type="subcellular location">
    <subcellularLocation>
        <location>Mitochondrion matrix</location>
    </subcellularLocation>
    <subcellularLocation>
        <location evidence="1">Cell membrane</location>
    </subcellularLocation>
</comment>
<comment type="miscellaneous">
    <text>In eukaryotes there are cytoplasmic, mitochondrial and chloroplastic isozymes.</text>
</comment>
<comment type="similarity">
    <text evidence="6">Belongs to the class-I pyridoxal-phosphate-dependent aminotransferase family.</text>
</comment>
<evidence type="ECO:0000250" key="1"/>
<evidence type="ECO:0000250" key="2">
    <source>
        <dbReference type="UniProtKB" id="P00505"/>
    </source>
</evidence>
<evidence type="ECO:0000250" key="3">
    <source>
        <dbReference type="UniProtKB" id="P00507"/>
    </source>
</evidence>
<evidence type="ECO:0000250" key="4">
    <source>
        <dbReference type="UniProtKB" id="P05202"/>
    </source>
</evidence>
<evidence type="ECO:0000250" key="5">
    <source>
        <dbReference type="UniProtKB" id="P12344"/>
    </source>
</evidence>
<evidence type="ECO:0000305" key="6"/>
<keyword id="KW-0007">Acetylation</keyword>
<keyword id="KW-0032">Aminotransferase</keyword>
<keyword id="KW-1003">Cell membrane</keyword>
<keyword id="KW-0903">Direct protein sequencing</keyword>
<keyword id="KW-0445">Lipid transport</keyword>
<keyword id="KW-0472">Membrane</keyword>
<keyword id="KW-0488">Methylation</keyword>
<keyword id="KW-0496">Mitochondrion</keyword>
<keyword id="KW-0944">Nitration</keyword>
<keyword id="KW-0597">Phosphoprotein</keyword>
<keyword id="KW-0663">Pyridoxal phosphate</keyword>
<keyword id="KW-1185">Reference proteome</keyword>
<keyword id="KW-0808">Transferase</keyword>
<keyword id="KW-0813">Transport</keyword>
<proteinExistence type="evidence at protein level"/>
<gene>
    <name type="primary">GOT2</name>
</gene>
<protein>
    <recommendedName>
        <fullName>Aspartate aminotransferase, mitochondrial</fullName>
        <shortName>mAspAT</shortName>
        <ecNumber evidence="3">2.6.1.1</ecNumber>
        <ecNumber evidence="3">2.6.1.7</ecNumber>
    </recommendedName>
    <alternativeName>
        <fullName>Fatty acid-binding protein</fullName>
        <shortName>FABP-1</shortName>
    </alternativeName>
    <alternativeName>
        <fullName>Glutamate oxaloacetate transaminase 2</fullName>
    </alternativeName>
    <alternativeName>
        <fullName>Kynurenine aminotransferase 4</fullName>
    </alternativeName>
    <alternativeName>
        <fullName>Kynurenine aminotransferase IV</fullName>
    </alternativeName>
    <alternativeName>
        <fullName>Kynurenine--oxoglutarate transaminase 4</fullName>
    </alternativeName>
    <alternativeName>
        <fullName>Kynurenine--oxoglutarate transaminase IV</fullName>
    </alternativeName>
    <alternativeName>
        <fullName>Plasma membrane-associated fatty acid-binding protein</fullName>
        <shortName>FABPpm</shortName>
    </alternativeName>
    <alternativeName>
        <fullName>Transaminase A</fullName>
    </alternativeName>
</protein>
<organism>
    <name type="scientific">Equus caballus</name>
    <name type="common">Horse</name>
    <dbReference type="NCBI Taxonomy" id="9796"/>
    <lineage>
        <taxon>Eukaryota</taxon>
        <taxon>Metazoa</taxon>
        <taxon>Chordata</taxon>
        <taxon>Craniata</taxon>
        <taxon>Vertebrata</taxon>
        <taxon>Euteleostomi</taxon>
        <taxon>Mammalia</taxon>
        <taxon>Eutheria</taxon>
        <taxon>Laurasiatheria</taxon>
        <taxon>Perissodactyla</taxon>
        <taxon>Equidae</taxon>
        <taxon>Equus</taxon>
    </lineage>
</organism>
<name>AATM_HORSE</name>
<reference key="1">
    <citation type="journal article" date="1986" name="J. Mol. Evol.">
        <title>The complete amino acid sequences of cytosolic and mitochondrial aspartate aminotransferases from horse heart, and inferences on evolution of the isoenzymes.</title>
        <authorList>
            <person name="Doonan S."/>
            <person name="Martini F."/>
            <person name="Angelaccio S."/>
            <person name="Pascarella S."/>
            <person name="Barra D."/>
            <person name="Bossa F."/>
        </authorList>
    </citation>
    <scope>PROTEIN SEQUENCE</scope>
</reference>
<reference key="2">
    <citation type="journal article" date="1983" name="Comp. Biochem. Physiol.">
        <title>Primary structure of aspartate aminotransferase from horse heart and comparison with that of other homotopic and heterotopic isoenzymes.</title>
        <authorList>
            <person name="Martini F."/>
            <person name="Angelaccio S."/>
            <person name="Barra D."/>
            <person name="Doonan S."/>
            <person name="Bossa F."/>
        </authorList>
    </citation>
    <scope>PARTIAL PROTEIN SEQUENCE</scope>
</reference>